<gene>
    <name evidence="1" type="primary">rpmB</name>
    <name type="ordered locus">Bcenmc03_2527</name>
</gene>
<dbReference type="EMBL" id="CP000958">
    <property type="protein sequence ID" value="ACA91688.1"/>
    <property type="molecule type" value="Genomic_DNA"/>
</dbReference>
<dbReference type="RefSeq" id="WP_004186391.1">
    <property type="nucleotide sequence ID" value="NC_010508.1"/>
</dbReference>
<dbReference type="SMR" id="B1JXB3"/>
<dbReference type="GeneID" id="98107656"/>
<dbReference type="KEGG" id="bcm:Bcenmc03_2527"/>
<dbReference type="HOGENOM" id="CLU_064548_3_1_4"/>
<dbReference type="Proteomes" id="UP000002169">
    <property type="component" value="Chromosome 1"/>
</dbReference>
<dbReference type="GO" id="GO:0022625">
    <property type="term" value="C:cytosolic large ribosomal subunit"/>
    <property type="evidence" value="ECO:0007669"/>
    <property type="project" value="TreeGrafter"/>
</dbReference>
<dbReference type="GO" id="GO:0003735">
    <property type="term" value="F:structural constituent of ribosome"/>
    <property type="evidence" value="ECO:0007669"/>
    <property type="project" value="InterPro"/>
</dbReference>
<dbReference type="GO" id="GO:0006412">
    <property type="term" value="P:translation"/>
    <property type="evidence" value="ECO:0007669"/>
    <property type="project" value="UniProtKB-UniRule"/>
</dbReference>
<dbReference type="FunFam" id="2.30.170.40:FF:000001">
    <property type="entry name" value="50S ribosomal protein L28"/>
    <property type="match status" value="1"/>
</dbReference>
<dbReference type="Gene3D" id="2.30.170.40">
    <property type="entry name" value="Ribosomal protein L28/L24"/>
    <property type="match status" value="1"/>
</dbReference>
<dbReference type="HAMAP" id="MF_00373">
    <property type="entry name" value="Ribosomal_bL28"/>
    <property type="match status" value="1"/>
</dbReference>
<dbReference type="InterPro" id="IPR026569">
    <property type="entry name" value="Ribosomal_bL28"/>
</dbReference>
<dbReference type="InterPro" id="IPR034704">
    <property type="entry name" value="Ribosomal_bL28/bL31-like_sf"/>
</dbReference>
<dbReference type="InterPro" id="IPR001383">
    <property type="entry name" value="Ribosomal_bL28_bact-type"/>
</dbReference>
<dbReference type="InterPro" id="IPR037147">
    <property type="entry name" value="Ribosomal_bL28_sf"/>
</dbReference>
<dbReference type="NCBIfam" id="TIGR00009">
    <property type="entry name" value="L28"/>
    <property type="match status" value="1"/>
</dbReference>
<dbReference type="PANTHER" id="PTHR13528">
    <property type="entry name" value="39S RIBOSOMAL PROTEIN L28, MITOCHONDRIAL"/>
    <property type="match status" value="1"/>
</dbReference>
<dbReference type="PANTHER" id="PTHR13528:SF2">
    <property type="entry name" value="LARGE RIBOSOMAL SUBUNIT PROTEIN BL28M"/>
    <property type="match status" value="1"/>
</dbReference>
<dbReference type="Pfam" id="PF00830">
    <property type="entry name" value="Ribosomal_L28"/>
    <property type="match status" value="1"/>
</dbReference>
<dbReference type="SUPFAM" id="SSF143800">
    <property type="entry name" value="L28p-like"/>
    <property type="match status" value="1"/>
</dbReference>
<proteinExistence type="inferred from homology"/>
<name>RL28_BURO0</name>
<accession>B1JXB3</accession>
<reference key="1">
    <citation type="submission" date="2008-02" db="EMBL/GenBank/DDBJ databases">
        <title>Complete sequence of chromosome 1 of Burkholderia cenocepacia MC0-3.</title>
        <authorList>
            <person name="Copeland A."/>
            <person name="Lucas S."/>
            <person name="Lapidus A."/>
            <person name="Barry K."/>
            <person name="Bruce D."/>
            <person name="Goodwin L."/>
            <person name="Glavina del Rio T."/>
            <person name="Dalin E."/>
            <person name="Tice H."/>
            <person name="Pitluck S."/>
            <person name="Chain P."/>
            <person name="Malfatti S."/>
            <person name="Shin M."/>
            <person name="Vergez L."/>
            <person name="Schmutz J."/>
            <person name="Larimer F."/>
            <person name="Land M."/>
            <person name="Hauser L."/>
            <person name="Kyrpides N."/>
            <person name="Mikhailova N."/>
            <person name="Tiedje J."/>
            <person name="Richardson P."/>
        </authorList>
    </citation>
    <scope>NUCLEOTIDE SEQUENCE [LARGE SCALE GENOMIC DNA]</scope>
    <source>
        <strain>MC0-3</strain>
    </source>
</reference>
<feature type="chain" id="PRO_1000121595" description="Large ribosomal subunit protein bL28">
    <location>
        <begin position="1"/>
        <end position="77"/>
    </location>
</feature>
<feature type="region of interest" description="Disordered" evidence="2">
    <location>
        <begin position="1"/>
        <end position="25"/>
    </location>
</feature>
<keyword id="KW-0687">Ribonucleoprotein</keyword>
<keyword id="KW-0689">Ribosomal protein</keyword>
<protein>
    <recommendedName>
        <fullName evidence="1">Large ribosomal subunit protein bL28</fullName>
    </recommendedName>
    <alternativeName>
        <fullName evidence="3">50S ribosomal protein L28</fullName>
    </alternativeName>
</protein>
<organism>
    <name type="scientific">Burkholderia orbicola (strain MC0-3)</name>
    <dbReference type="NCBI Taxonomy" id="406425"/>
    <lineage>
        <taxon>Bacteria</taxon>
        <taxon>Pseudomonadati</taxon>
        <taxon>Pseudomonadota</taxon>
        <taxon>Betaproteobacteria</taxon>
        <taxon>Burkholderiales</taxon>
        <taxon>Burkholderiaceae</taxon>
        <taxon>Burkholderia</taxon>
        <taxon>Burkholderia cepacia complex</taxon>
        <taxon>Burkholderia orbicola</taxon>
    </lineage>
</organism>
<sequence length="77" mass="8761">MARVCQVTGKAPMSGNNVSHANNKTKRRFLPNLQNRRFWVESENRWVRLRVSNAGLRLIDKNGIDSVLADLRARGEA</sequence>
<comment type="similarity">
    <text evidence="1">Belongs to the bacterial ribosomal protein bL28 family.</text>
</comment>
<evidence type="ECO:0000255" key="1">
    <source>
        <dbReference type="HAMAP-Rule" id="MF_00373"/>
    </source>
</evidence>
<evidence type="ECO:0000256" key="2">
    <source>
        <dbReference type="SAM" id="MobiDB-lite"/>
    </source>
</evidence>
<evidence type="ECO:0000305" key="3"/>